<organism>
    <name type="scientific">Nostoc sp. (strain PCC 7120 / SAG 25.82 / UTEX 2576)</name>
    <dbReference type="NCBI Taxonomy" id="103690"/>
    <lineage>
        <taxon>Bacteria</taxon>
        <taxon>Bacillati</taxon>
        <taxon>Cyanobacteriota</taxon>
        <taxon>Cyanophyceae</taxon>
        <taxon>Nostocales</taxon>
        <taxon>Nostocaceae</taxon>
        <taxon>Nostoc</taxon>
    </lineage>
</organism>
<sequence length="350" mass="38820">MGVTSTAPHLLRAARGEIVDRPPVWMMRQAGRYMKAYRDLREKYPSFRDRSEIPEVAIEVSLQPWKAFQPDGVILFSDIVTPLPGLGIEMDIAEGKGPIIHAPIRTQAQIEQLRPLEPEAALPFIKTILQALRQEVGNQSTVLGFVGAPWTLAAYAVEGKGSKTYSIIKNMAFSDPTILHQLLSKLADAIAIYARYQIDSGAQVVQMFDSWAGQLSPQDYDTFALPYQQRVFQQIKQTHPDTPLILLVSGSAGVLERMGQSGADIVTVDWTVDMADARARLGKQMKVQGNLDPGVLYASKQFIRDRIIDTVRKAGNWGHILNLGHGVLPDTPEENVAFFFETAKQLNVLV</sequence>
<proteinExistence type="inferred from homology"/>
<protein>
    <recommendedName>
        <fullName evidence="1">Uroporphyrinogen decarboxylase</fullName>
        <shortName evidence="1">UPD</shortName>
        <shortName evidence="1">URO-D</shortName>
        <ecNumber evidence="1">4.1.1.37</ecNumber>
    </recommendedName>
</protein>
<gene>
    <name evidence="1" type="primary">hemE</name>
    <name type="ordered locus">all3909</name>
</gene>
<accession>Q8YQC4</accession>
<dbReference type="EC" id="4.1.1.37" evidence="1"/>
<dbReference type="EMBL" id="BA000019">
    <property type="protein sequence ID" value="BAB75608.1"/>
    <property type="molecule type" value="Genomic_DNA"/>
</dbReference>
<dbReference type="PIR" id="AF2294">
    <property type="entry name" value="AF2294"/>
</dbReference>
<dbReference type="RefSeq" id="WP_010998050.1">
    <property type="nucleotide sequence ID" value="NZ_RSCN01000043.1"/>
</dbReference>
<dbReference type="SMR" id="Q8YQC4"/>
<dbReference type="STRING" id="103690.gene:10495951"/>
<dbReference type="KEGG" id="ana:all3909"/>
<dbReference type="eggNOG" id="COG0407">
    <property type="taxonomic scope" value="Bacteria"/>
</dbReference>
<dbReference type="OrthoDB" id="9806656at2"/>
<dbReference type="UniPathway" id="UPA00251">
    <property type="reaction ID" value="UER00321"/>
</dbReference>
<dbReference type="Proteomes" id="UP000002483">
    <property type="component" value="Chromosome"/>
</dbReference>
<dbReference type="GO" id="GO:0005737">
    <property type="term" value="C:cytoplasm"/>
    <property type="evidence" value="ECO:0007669"/>
    <property type="project" value="UniProtKB-SubCell"/>
</dbReference>
<dbReference type="GO" id="GO:0004853">
    <property type="term" value="F:uroporphyrinogen decarboxylase activity"/>
    <property type="evidence" value="ECO:0007669"/>
    <property type="project" value="UniProtKB-UniRule"/>
</dbReference>
<dbReference type="GO" id="GO:0006782">
    <property type="term" value="P:protoporphyrinogen IX biosynthetic process"/>
    <property type="evidence" value="ECO:0007669"/>
    <property type="project" value="UniProtKB-UniRule"/>
</dbReference>
<dbReference type="CDD" id="cd00717">
    <property type="entry name" value="URO-D"/>
    <property type="match status" value="1"/>
</dbReference>
<dbReference type="FunFam" id="3.20.20.210:FF:000006">
    <property type="entry name" value="Uroporphyrinogen decarboxylase"/>
    <property type="match status" value="1"/>
</dbReference>
<dbReference type="Gene3D" id="3.20.20.210">
    <property type="match status" value="1"/>
</dbReference>
<dbReference type="HAMAP" id="MF_00218">
    <property type="entry name" value="URO_D"/>
    <property type="match status" value="1"/>
</dbReference>
<dbReference type="InterPro" id="IPR038071">
    <property type="entry name" value="UROD/MetE-like_sf"/>
</dbReference>
<dbReference type="InterPro" id="IPR006361">
    <property type="entry name" value="Uroporphyrinogen_deCO2ase_HemE"/>
</dbReference>
<dbReference type="InterPro" id="IPR000257">
    <property type="entry name" value="Uroporphyrinogen_deCOase"/>
</dbReference>
<dbReference type="NCBIfam" id="TIGR01464">
    <property type="entry name" value="hemE"/>
    <property type="match status" value="1"/>
</dbReference>
<dbReference type="PANTHER" id="PTHR21091">
    <property type="entry name" value="METHYLTETRAHYDROFOLATE:HOMOCYSTEINE METHYLTRANSFERASE RELATED"/>
    <property type="match status" value="1"/>
</dbReference>
<dbReference type="PANTHER" id="PTHR21091:SF169">
    <property type="entry name" value="UROPORPHYRINOGEN DECARBOXYLASE"/>
    <property type="match status" value="1"/>
</dbReference>
<dbReference type="Pfam" id="PF01208">
    <property type="entry name" value="URO-D"/>
    <property type="match status" value="1"/>
</dbReference>
<dbReference type="SUPFAM" id="SSF51726">
    <property type="entry name" value="UROD/MetE-like"/>
    <property type="match status" value="1"/>
</dbReference>
<dbReference type="PROSITE" id="PS00906">
    <property type="entry name" value="UROD_1"/>
    <property type="match status" value="1"/>
</dbReference>
<dbReference type="PROSITE" id="PS00907">
    <property type="entry name" value="UROD_2"/>
    <property type="match status" value="1"/>
</dbReference>
<feature type="chain" id="PRO_0000187579" description="Uroporphyrinogen decarboxylase">
    <location>
        <begin position="1"/>
        <end position="350"/>
    </location>
</feature>
<feature type="binding site" evidence="1">
    <location>
        <begin position="28"/>
        <end position="32"/>
    </location>
    <ligand>
        <name>substrate</name>
    </ligand>
</feature>
<feature type="binding site" evidence="1">
    <location>
        <position position="47"/>
    </location>
    <ligand>
        <name>substrate</name>
    </ligand>
</feature>
<feature type="binding site" evidence="1">
    <location>
        <position position="78"/>
    </location>
    <ligand>
        <name>substrate</name>
    </ligand>
</feature>
<feature type="binding site" evidence="1">
    <location>
        <position position="155"/>
    </location>
    <ligand>
        <name>substrate</name>
    </ligand>
</feature>
<feature type="binding site" evidence="1">
    <location>
        <position position="210"/>
    </location>
    <ligand>
        <name>substrate</name>
    </ligand>
</feature>
<feature type="binding site" evidence="1">
    <location>
        <position position="325"/>
    </location>
    <ligand>
        <name>substrate</name>
    </ligand>
</feature>
<feature type="site" description="Transition state stabilizer" evidence="1">
    <location>
        <position position="78"/>
    </location>
</feature>
<reference key="1">
    <citation type="journal article" date="2001" name="DNA Res.">
        <title>Complete genomic sequence of the filamentous nitrogen-fixing cyanobacterium Anabaena sp. strain PCC 7120.</title>
        <authorList>
            <person name="Kaneko T."/>
            <person name="Nakamura Y."/>
            <person name="Wolk C.P."/>
            <person name="Kuritz T."/>
            <person name="Sasamoto S."/>
            <person name="Watanabe A."/>
            <person name="Iriguchi M."/>
            <person name="Ishikawa A."/>
            <person name="Kawashima K."/>
            <person name="Kimura T."/>
            <person name="Kishida Y."/>
            <person name="Kohara M."/>
            <person name="Matsumoto M."/>
            <person name="Matsuno A."/>
            <person name="Muraki A."/>
            <person name="Nakazaki N."/>
            <person name="Shimpo S."/>
            <person name="Sugimoto M."/>
            <person name="Takazawa M."/>
            <person name="Yamada M."/>
            <person name="Yasuda M."/>
            <person name="Tabata S."/>
        </authorList>
    </citation>
    <scope>NUCLEOTIDE SEQUENCE [LARGE SCALE GENOMIC DNA]</scope>
    <source>
        <strain>PCC 7120 / SAG 25.82 / UTEX 2576</strain>
    </source>
</reference>
<name>DCUP_NOSS1</name>
<comment type="function">
    <text evidence="1">Catalyzes the decarboxylation of four acetate groups of uroporphyrinogen-III to yield coproporphyrinogen-III.</text>
</comment>
<comment type="catalytic activity">
    <reaction evidence="1">
        <text>uroporphyrinogen III + 4 H(+) = coproporphyrinogen III + 4 CO2</text>
        <dbReference type="Rhea" id="RHEA:19865"/>
        <dbReference type="ChEBI" id="CHEBI:15378"/>
        <dbReference type="ChEBI" id="CHEBI:16526"/>
        <dbReference type="ChEBI" id="CHEBI:57308"/>
        <dbReference type="ChEBI" id="CHEBI:57309"/>
        <dbReference type="EC" id="4.1.1.37"/>
    </reaction>
</comment>
<comment type="pathway">
    <text evidence="1">Porphyrin-containing compound metabolism; protoporphyrin-IX biosynthesis; coproporphyrinogen-III from 5-aminolevulinate: step 4/4.</text>
</comment>
<comment type="subunit">
    <text evidence="1">Homodimer.</text>
</comment>
<comment type="subcellular location">
    <subcellularLocation>
        <location evidence="1">Cytoplasm</location>
    </subcellularLocation>
</comment>
<comment type="similarity">
    <text evidence="1">Belongs to the uroporphyrinogen decarboxylase family.</text>
</comment>
<evidence type="ECO:0000255" key="1">
    <source>
        <dbReference type="HAMAP-Rule" id="MF_00218"/>
    </source>
</evidence>
<keyword id="KW-0963">Cytoplasm</keyword>
<keyword id="KW-0210">Decarboxylase</keyword>
<keyword id="KW-0456">Lyase</keyword>
<keyword id="KW-0627">Porphyrin biosynthesis</keyword>
<keyword id="KW-1185">Reference proteome</keyword>